<name>PLBL2_BOVIN</name>
<evidence type="ECO:0000250" key="1"/>
<evidence type="ECO:0000255" key="2"/>
<evidence type="ECO:0000305" key="3"/>
<comment type="function">
    <text evidence="1">Putative phospholipase.</text>
</comment>
<comment type="subunit">
    <text evidence="1">Interacts with IGF2R.</text>
</comment>
<comment type="subcellular location">
    <subcellularLocation>
        <location evidence="1">Lysosome lumen</location>
    </subcellularLocation>
</comment>
<comment type="PTM">
    <text evidence="1">Glycosylated; contains mannose 6-phosphate sugars.</text>
</comment>
<comment type="similarity">
    <text evidence="3">Belongs to the phospholipase B-like family.</text>
</comment>
<accession>Q2KIY5</accession>
<reference key="1">
    <citation type="submission" date="2006-01" db="EMBL/GenBank/DDBJ databases">
        <authorList>
            <consortium name="NIH - Mammalian Gene Collection (MGC) project"/>
        </authorList>
    </citation>
    <scope>NUCLEOTIDE SEQUENCE [LARGE SCALE MRNA]</scope>
    <source>
        <strain>Crossbred X Angus</strain>
        <tissue>Liver</tissue>
    </source>
</reference>
<organism>
    <name type="scientific">Bos taurus</name>
    <name type="common">Bovine</name>
    <dbReference type="NCBI Taxonomy" id="9913"/>
    <lineage>
        <taxon>Eukaryota</taxon>
        <taxon>Metazoa</taxon>
        <taxon>Chordata</taxon>
        <taxon>Craniata</taxon>
        <taxon>Vertebrata</taxon>
        <taxon>Euteleostomi</taxon>
        <taxon>Mammalia</taxon>
        <taxon>Eutheria</taxon>
        <taxon>Laurasiatheria</taxon>
        <taxon>Artiodactyla</taxon>
        <taxon>Ruminantia</taxon>
        <taxon>Pecora</taxon>
        <taxon>Bovidae</taxon>
        <taxon>Bovinae</taxon>
        <taxon>Bos</taxon>
    </lineage>
</organism>
<proteinExistence type="evidence at transcript level"/>
<keyword id="KW-1015">Disulfide bond</keyword>
<keyword id="KW-0325">Glycoprotein</keyword>
<keyword id="KW-0378">Hydrolase</keyword>
<keyword id="KW-0442">Lipid degradation</keyword>
<keyword id="KW-0443">Lipid metabolism</keyword>
<keyword id="KW-0458">Lysosome</keyword>
<keyword id="KW-1185">Reference proteome</keyword>
<keyword id="KW-0732">Signal</keyword>
<gene>
    <name type="primary">PLBD2</name>
</gene>
<sequence length="589" mass="65693">MVAPMYGSPGGRLARAVTRALALALVLALLVGLFLSGLTGAIPTPRGQRGRGMPVPPASRCRSLLLDPETGQLRLVDGRHPDAVAWANLTNAIRETGWAFLELHTNGRFNDSLQAYAAGVVEAAVSEELIYMYWMNTVVNYCGPFEYEVGYCERLKNFLEANLEWMQKEMELNNGSAYWHQVRLTLLQLKGLEDSYEGSVAFPTGKFTVKPLGFLLLQISGDLEDLEVALNKTKTNHAMGSGSCSALIKLLPGQRDLLVAHNTWHSYQYMLRIMKKYWFQFREGPQAESTRAPGNKVIFSSYPGTIFSCDDFYILGSGLVTLETTIGNKNPALWKYVQPTGCVLEWMRNVVANRLALDGDSWADIFKRFNSGTYNNQWMIVDYKAFVPGGPSPGRRVLTVLEQIPGMVVVADRTSELYQKTYWASYNIPSFESVFNASGLPALVARYGPWFSYDGSPRAQIFRRNHSLVHDLDSMMRLMRYNDFLHDPLSLCKACTPKPNGENAISARSDLNPANGSYPFQALHQRSHGGIDVKVTSTALAKALRLLAVSGPTWDQLPPFQWSTSPFSGMLHMGQPDLRKFSPIEVSWD</sequence>
<feature type="signal peptide" evidence="2">
    <location>
        <begin position="1"/>
        <end position="41"/>
    </location>
</feature>
<feature type="chain" id="PRO_0000286109" description="Putative phospholipase B-like 2">
    <location>
        <begin position="42"/>
        <end position="589"/>
    </location>
</feature>
<feature type="glycosylation site" description="N-linked (GlcNAc...) asparagine" evidence="2">
    <location>
        <position position="88"/>
    </location>
</feature>
<feature type="glycosylation site" description="N-linked (GlcNAc...) asparagine" evidence="2">
    <location>
        <position position="110"/>
    </location>
</feature>
<feature type="glycosylation site" description="N-linked (GlcNAc...) asparagine" evidence="2">
    <location>
        <position position="174"/>
    </location>
</feature>
<feature type="glycosylation site" description="N-linked (GlcNAc...) asparagine" evidence="2">
    <location>
        <position position="231"/>
    </location>
</feature>
<feature type="glycosylation site" description="N-linked (GlcNAc...) asparagine" evidence="2">
    <location>
        <position position="436"/>
    </location>
</feature>
<feature type="glycosylation site" description="N-linked (GlcNAc...) asparagine" evidence="2">
    <location>
        <position position="465"/>
    </location>
</feature>
<feature type="glycosylation site" description="N-linked (GlcNAc...) asparagine" evidence="2">
    <location>
        <position position="515"/>
    </location>
</feature>
<feature type="disulfide bond" evidence="1">
    <location>
        <begin position="142"/>
        <end position="152"/>
    </location>
</feature>
<feature type="disulfide bond" evidence="1">
    <location>
        <begin position="492"/>
        <end position="495"/>
    </location>
</feature>
<dbReference type="EC" id="3.1.1.-"/>
<dbReference type="EMBL" id="BC112461">
    <property type="protein sequence ID" value="AAI12462.1"/>
    <property type="molecule type" value="mRNA"/>
</dbReference>
<dbReference type="RefSeq" id="NP_001039635.1">
    <property type="nucleotide sequence ID" value="NM_001046170.1"/>
</dbReference>
<dbReference type="SMR" id="Q2KIY5"/>
<dbReference type="FunCoup" id="Q2KIY5">
    <property type="interactions" value="959"/>
</dbReference>
<dbReference type="STRING" id="9913.ENSBTAP00000062939"/>
<dbReference type="GlyCosmos" id="Q2KIY5">
    <property type="glycosylation" value="7 sites, No reported glycans"/>
</dbReference>
<dbReference type="GlyGen" id="Q2KIY5">
    <property type="glycosylation" value="7 sites"/>
</dbReference>
<dbReference type="PaxDb" id="9913-ENSBTAP00000025343"/>
<dbReference type="GeneID" id="514347"/>
<dbReference type="KEGG" id="bta:514347"/>
<dbReference type="CTD" id="196463"/>
<dbReference type="eggNOG" id="KOG3774">
    <property type="taxonomic scope" value="Eukaryota"/>
</dbReference>
<dbReference type="InParanoid" id="Q2KIY5"/>
<dbReference type="OrthoDB" id="443524at2759"/>
<dbReference type="Proteomes" id="UP000009136">
    <property type="component" value="Unplaced"/>
</dbReference>
<dbReference type="GO" id="GO:0005576">
    <property type="term" value="C:extracellular region"/>
    <property type="evidence" value="ECO:0000318"/>
    <property type="project" value="GO_Central"/>
</dbReference>
<dbReference type="GO" id="GO:0043202">
    <property type="term" value="C:lysosomal lumen"/>
    <property type="evidence" value="ECO:0007669"/>
    <property type="project" value="UniProtKB-SubCell"/>
</dbReference>
<dbReference type="GO" id="GO:0004620">
    <property type="term" value="F:phospholipase activity"/>
    <property type="evidence" value="ECO:0000318"/>
    <property type="project" value="GO_Central"/>
</dbReference>
<dbReference type="GO" id="GO:0009395">
    <property type="term" value="P:phospholipid catabolic process"/>
    <property type="evidence" value="ECO:0000318"/>
    <property type="project" value="GO_Central"/>
</dbReference>
<dbReference type="Gene3D" id="3.60.60.20">
    <property type="match status" value="1"/>
</dbReference>
<dbReference type="Gene3D" id="2.10.70.60">
    <property type="entry name" value="Phospholipase B-like, domain 1"/>
    <property type="match status" value="1"/>
</dbReference>
<dbReference type="Gene3D" id="1.10.439.20">
    <property type="entry name" value="Phospholipase B-like, domain 2"/>
    <property type="match status" value="1"/>
</dbReference>
<dbReference type="InterPro" id="IPR007000">
    <property type="entry name" value="PLipase_B-like"/>
</dbReference>
<dbReference type="InterPro" id="IPR043040">
    <property type="entry name" value="PLipase_B-like_dom1"/>
</dbReference>
<dbReference type="InterPro" id="IPR043041">
    <property type="entry name" value="PLipase_B-like_dom2"/>
</dbReference>
<dbReference type="InterPro" id="IPR043042">
    <property type="entry name" value="PLipase_B-like_dom3"/>
</dbReference>
<dbReference type="PANTHER" id="PTHR12370:SF3">
    <property type="entry name" value="PHOSPHOLIPASE B-LIKE 2-RELATED"/>
    <property type="match status" value="1"/>
</dbReference>
<dbReference type="PANTHER" id="PTHR12370">
    <property type="entry name" value="PHOSPHOLIPASE B-RELATED"/>
    <property type="match status" value="1"/>
</dbReference>
<dbReference type="Pfam" id="PF04916">
    <property type="entry name" value="Phospholip_B"/>
    <property type="match status" value="1"/>
</dbReference>
<protein>
    <recommendedName>
        <fullName>Putative phospholipase B-like 2</fullName>
        <ecNumber>3.1.1.-</ecNumber>
    </recommendedName>
    <alternativeName>
        <fullName>LAMA-like protein 2</fullName>
    </alternativeName>
    <alternativeName>
        <fullName>Lamina ancestor homolog 2</fullName>
    </alternativeName>
    <alternativeName>
        <fullName>Phospholipase B domain-containing protein 2</fullName>
    </alternativeName>
</protein>